<proteinExistence type="inferred from homology"/>
<protein>
    <recommendedName>
        <fullName evidence="1">NAD-capped RNA hydrolase NudC</fullName>
        <shortName evidence="1">DeNADding enzyme NudC</shortName>
        <ecNumber evidence="1">3.6.1.-</ecNumber>
    </recommendedName>
    <alternativeName>
        <fullName evidence="1">NADH pyrophosphatase</fullName>
        <ecNumber evidence="1">3.6.1.22</ecNumber>
    </alternativeName>
</protein>
<evidence type="ECO:0000255" key="1">
    <source>
        <dbReference type="HAMAP-Rule" id="MF_00297"/>
    </source>
</evidence>
<dbReference type="EC" id="3.6.1.-" evidence="1"/>
<dbReference type="EC" id="3.6.1.22" evidence="1"/>
<dbReference type="EMBL" id="CP000949">
    <property type="protein sequence ID" value="ACA72345.1"/>
    <property type="molecule type" value="Genomic_DNA"/>
</dbReference>
<dbReference type="SMR" id="B1J6H6"/>
<dbReference type="STRING" id="390235.PputW619_1842"/>
<dbReference type="KEGG" id="ppw:PputW619_1842"/>
<dbReference type="eggNOG" id="COG2816">
    <property type="taxonomic scope" value="Bacteria"/>
</dbReference>
<dbReference type="HOGENOM" id="CLU_037162_0_1_6"/>
<dbReference type="OrthoDB" id="9791656at2"/>
<dbReference type="GO" id="GO:0005829">
    <property type="term" value="C:cytosol"/>
    <property type="evidence" value="ECO:0007669"/>
    <property type="project" value="TreeGrafter"/>
</dbReference>
<dbReference type="GO" id="GO:0000287">
    <property type="term" value="F:magnesium ion binding"/>
    <property type="evidence" value="ECO:0007669"/>
    <property type="project" value="UniProtKB-UniRule"/>
</dbReference>
<dbReference type="GO" id="GO:0030145">
    <property type="term" value="F:manganese ion binding"/>
    <property type="evidence" value="ECO:0007669"/>
    <property type="project" value="UniProtKB-UniRule"/>
</dbReference>
<dbReference type="GO" id="GO:0000210">
    <property type="term" value="F:NAD+ diphosphatase activity"/>
    <property type="evidence" value="ECO:0007669"/>
    <property type="project" value="UniProtKB-UniRule"/>
</dbReference>
<dbReference type="GO" id="GO:0035529">
    <property type="term" value="F:NADH pyrophosphatase activity"/>
    <property type="evidence" value="ECO:0007669"/>
    <property type="project" value="TreeGrafter"/>
</dbReference>
<dbReference type="GO" id="GO:0110153">
    <property type="term" value="F:RNA NAD-cap (NMN-forming) hydrolase activity"/>
    <property type="evidence" value="ECO:0007669"/>
    <property type="project" value="RHEA"/>
</dbReference>
<dbReference type="GO" id="GO:0008270">
    <property type="term" value="F:zinc ion binding"/>
    <property type="evidence" value="ECO:0007669"/>
    <property type="project" value="UniProtKB-UniRule"/>
</dbReference>
<dbReference type="GO" id="GO:0019677">
    <property type="term" value="P:NAD catabolic process"/>
    <property type="evidence" value="ECO:0007669"/>
    <property type="project" value="TreeGrafter"/>
</dbReference>
<dbReference type="GO" id="GO:0006734">
    <property type="term" value="P:NADH metabolic process"/>
    <property type="evidence" value="ECO:0007669"/>
    <property type="project" value="TreeGrafter"/>
</dbReference>
<dbReference type="GO" id="GO:0006742">
    <property type="term" value="P:NADP catabolic process"/>
    <property type="evidence" value="ECO:0007669"/>
    <property type="project" value="TreeGrafter"/>
</dbReference>
<dbReference type="CDD" id="cd03429">
    <property type="entry name" value="NUDIX_NADH_pyrophosphatase_Nudt13"/>
    <property type="match status" value="1"/>
</dbReference>
<dbReference type="Gene3D" id="3.90.79.20">
    <property type="match status" value="1"/>
</dbReference>
<dbReference type="Gene3D" id="3.90.79.10">
    <property type="entry name" value="Nucleoside Triphosphate Pyrophosphohydrolase"/>
    <property type="match status" value="1"/>
</dbReference>
<dbReference type="HAMAP" id="MF_00297">
    <property type="entry name" value="Nudix_NudC"/>
    <property type="match status" value="1"/>
</dbReference>
<dbReference type="InterPro" id="IPR050241">
    <property type="entry name" value="NAD-cap_RNA_hydrolase_NudC"/>
</dbReference>
<dbReference type="InterPro" id="IPR015375">
    <property type="entry name" value="NADH_PPase-like_N"/>
</dbReference>
<dbReference type="InterPro" id="IPR049734">
    <property type="entry name" value="NudC-like_C"/>
</dbReference>
<dbReference type="InterPro" id="IPR015797">
    <property type="entry name" value="NUDIX_hydrolase-like_dom_sf"/>
</dbReference>
<dbReference type="InterPro" id="IPR000086">
    <property type="entry name" value="NUDIX_hydrolase_dom"/>
</dbReference>
<dbReference type="InterPro" id="IPR022925">
    <property type="entry name" value="RNA_Hydrolase_NudC"/>
</dbReference>
<dbReference type="InterPro" id="IPR015376">
    <property type="entry name" value="Znr_NADH_PPase"/>
</dbReference>
<dbReference type="NCBIfam" id="NF001299">
    <property type="entry name" value="PRK00241.1"/>
    <property type="match status" value="1"/>
</dbReference>
<dbReference type="PANTHER" id="PTHR42904:SF6">
    <property type="entry name" value="NAD-CAPPED RNA HYDROLASE NUDT12"/>
    <property type="match status" value="1"/>
</dbReference>
<dbReference type="PANTHER" id="PTHR42904">
    <property type="entry name" value="NUDIX HYDROLASE, NUDC SUBFAMILY"/>
    <property type="match status" value="1"/>
</dbReference>
<dbReference type="Pfam" id="PF00293">
    <property type="entry name" value="NUDIX"/>
    <property type="match status" value="1"/>
</dbReference>
<dbReference type="Pfam" id="PF09296">
    <property type="entry name" value="NUDIX-like"/>
    <property type="match status" value="1"/>
</dbReference>
<dbReference type="Pfam" id="PF09297">
    <property type="entry name" value="Zn_ribbon_NUD"/>
    <property type="match status" value="1"/>
</dbReference>
<dbReference type="SUPFAM" id="SSF55811">
    <property type="entry name" value="Nudix"/>
    <property type="match status" value="2"/>
</dbReference>
<dbReference type="PROSITE" id="PS51462">
    <property type="entry name" value="NUDIX"/>
    <property type="match status" value="1"/>
</dbReference>
<keyword id="KW-0378">Hydrolase</keyword>
<keyword id="KW-0460">Magnesium</keyword>
<keyword id="KW-0464">Manganese</keyword>
<keyword id="KW-0479">Metal-binding</keyword>
<keyword id="KW-0520">NAD</keyword>
<keyword id="KW-0862">Zinc</keyword>
<name>NUDC_PSEPW</name>
<comment type="function">
    <text evidence="1">mRNA decapping enzyme that specifically removes the nicotinamide adenine dinucleotide (NAD) cap from a subset of mRNAs by hydrolyzing the diphosphate linkage to produce nicotinamide mononucleotide (NMN) and 5' monophosphate mRNA. The NAD-cap is present at the 5'-end of some mRNAs and stabilizes RNA against 5'-processing. Has preference for mRNAs with a 5'-end purine. Catalyzes the hydrolysis of a broad range of dinucleotide pyrophosphates.</text>
</comment>
<comment type="catalytic activity">
    <reaction evidence="1">
        <text>a 5'-end NAD(+)-phospho-ribonucleoside in mRNA + H2O = a 5'-end phospho-adenosine-phospho-ribonucleoside in mRNA + beta-nicotinamide D-ribonucleotide + 2 H(+)</text>
        <dbReference type="Rhea" id="RHEA:60876"/>
        <dbReference type="Rhea" id="RHEA-COMP:15698"/>
        <dbReference type="Rhea" id="RHEA-COMP:15719"/>
        <dbReference type="ChEBI" id="CHEBI:14649"/>
        <dbReference type="ChEBI" id="CHEBI:15377"/>
        <dbReference type="ChEBI" id="CHEBI:15378"/>
        <dbReference type="ChEBI" id="CHEBI:144029"/>
        <dbReference type="ChEBI" id="CHEBI:144051"/>
    </reaction>
    <physiologicalReaction direction="left-to-right" evidence="1">
        <dbReference type="Rhea" id="RHEA:60877"/>
    </physiologicalReaction>
</comment>
<comment type="catalytic activity">
    <reaction evidence="1">
        <text>NAD(+) + H2O = beta-nicotinamide D-ribonucleotide + AMP + 2 H(+)</text>
        <dbReference type="Rhea" id="RHEA:11800"/>
        <dbReference type="ChEBI" id="CHEBI:14649"/>
        <dbReference type="ChEBI" id="CHEBI:15377"/>
        <dbReference type="ChEBI" id="CHEBI:15378"/>
        <dbReference type="ChEBI" id="CHEBI:57540"/>
        <dbReference type="ChEBI" id="CHEBI:456215"/>
        <dbReference type="EC" id="3.6.1.22"/>
    </reaction>
</comment>
<comment type="catalytic activity">
    <reaction evidence="1">
        <text>NADH + H2O = reduced beta-nicotinamide D-ribonucleotide + AMP + 2 H(+)</text>
        <dbReference type="Rhea" id="RHEA:48868"/>
        <dbReference type="ChEBI" id="CHEBI:15377"/>
        <dbReference type="ChEBI" id="CHEBI:15378"/>
        <dbReference type="ChEBI" id="CHEBI:57945"/>
        <dbReference type="ChEBI" id="CHEBI:90832"/>
        <dbReference type="ChEBI" id="CHEBI:456215"/>
        <dbReference type="EC" id="3.6.1.22"/>
    </reaction>
</comment>
<comment type="cofactor">
    <cofactor evidence="1">
        <name>Mg(2+)</name>
        <dbReference type="ChEBI" id="CHEBI:18420"/>
    </cofactor>
    <cofactor evidence="1">
        <name>Mn(2+)</name>
        <dbReference type="ChEBI" id="CHEBI:29035"/>
    </cofactor>
    <text evidence="1">Divalent metal cations. Mg(2+) or Mn(2+).</text>
</comment>
<comment type="cofactor">
    <cofactor evidence="1">
        <name>Zn(2+)</name>
        <dbReference type="ChEBI" id="CHEBI:29105"/>
    </cofactor>
    <text evidence="1">Binds 1 zinc ion per subunit.</text>
</comment>
<comment type="subunit">
    <text evidence="1">Homodimer.</text>
</comment>
<comment type="similarity">
    <text evidence="1">Belongs to the Nudix hydrolase family. NudC subfamily.</text>
</comment>
<feature type="chain" id="PRO_1000115245" description="NAD-capped RNA hydrolase NudC">
    <location>
        <begin position="1"/>
        <end position="276"/>
    </location>
</feature>
<feature type="domain" description="Nudix hydrolase" evidence="1">
    <location>
        <begin position="139"/>
        <end position="262"/>
    </location>
</feature>
<feature type="short sequence motif" description="Nudix box" evidence="1">
    <location>
        <begin position="173"/>
        <end position="194"/>
    </location>
</feature>
<feature type="binding site" evidence="1">
    <location>
        <position position="82"/>
    </location>
    <ligand>
        <name>substrate</name>
    </ligand>
</feature>
<feature type="binding site" evidence="1">
    <location>
        <position position="112"/>
    </location>
    <ligand>
        <name>Zn(2+)</name>
        <dbReference type="ChEBI" id="CHEBI:29105"/>
    </ligand>
</feature>
<feature type="binding site" evidence="1">
    <location>
        <position position="115"/>
    </location>
    <ligand>
        <name>Zn(2+)</name>
        <dbReference type="ChEBI" id="CHEBI:29105"/>
    </ligand>
</feature>
<feature type="binding site" evidence="1">
    <location>
        <position position="125"/>
    </location>
    <ligand>
        <name>substrate</name>
    </ligand>
</feature>
<feature type="binding site" evidence="1">
    <location>
        <position position="130"/>
    </location>
    <ligand>
        <name>Zn(2+)</name>
        <dbReference type="ChEBI" id="CHEBI:29105"/>
    </ligand>
</feature>
<feature type="binding site" evidence="1">
    <location>
        <position position="133"/>
    </location>
    <ligand>
        <name>Zn(2+)</name>
        <dbReference type="ChEBI" id="CHEBI:29105"/>
    </ligand>
</feature>
<feature type="binding site" evidence="1">
    <location>
        <position position="138"/>
    </location>
    <ligand>
        <name>substrate</name>
    </ligand>
</feature>
<feature type="binding site" evidence="1">
    <location>
        <position position="172"/>
    </location>
    <ligand>
        <name>a divalent metal cation</name>
        <dbReference type="ChEBI" id="CHEBI:60240"/>
        <label>1</label>
    </ligand>
</feature>
<feature type="binding site" evidence="1">
    <location>
        <position position="188"/>
    </location>
    <ligand>
        <name>a divalent metal cation</name>
        <dbReference type="ChEBI" id="CHEBI:60240"/>
        <label>2</label>
    </ligand>
</feature>
<feature type="binding site" evidence="1">
    <location>
        <position position="188"/>
    </location>
    <ligand>
        <name>a divalent metal cation</name>
        <dbReference type="ChEBI" id="CHEBI:60240"/>
        <label>3</label>
    </ligand>
</feature>
<feature type="binding site" evidence="1">
    <location>
        <position position="192"/>
    </location>
    <ligand>
        <name>a divalent metal cation</name>
        <dbReference type="ChEBI" id="CHEBI:60240"/>
        <label>1</label>
    </ligand>
</feature>
<feature type="binding site" evidence="1">
    <location>
        <position position="192"/>
    </location>
    <ligand>
        <name>a divalent metal cation</name>
        <dbReference type="ChEBI" id="CHEBI:60240"/>
        <label>3</label>
    </ligand>
</feature>
<feature type="binding site" evidence="1">
    <location>
        <begin position="206"/>
        <end position="213"/>
    </location>
    <ligand>
        <name>substrate</name>
    </ligand>
</feature>
<feature type="binding site" evidence="1">
    <location>
        <position position="233"/>
    </location>
    <ligand>
        <name>a divalent metal cation</name>
        <dbReference type="ChEBI" id="CHEBI:60240"/>
        <label>1</label>
    </ligand>
</feature>
<feature type="binding site" evidence="1">
    <location>
        <position position="233"/>
    </location>
    <ligand>
        <name>a divalent metal cation</name>
        <dbReference type="ChEBI" id="CHEBI:60240"/>
        <label>3</label>
    </ligand>
</feature>
<feature type="binding site" evidence="1">
    <location>
        <position position="255"/>
    </location>
    <ligand>
        <name>substrate</name>
    </ligand>
</feature>
<gene>
    <name evidence="1" type="primary">nudC</name>
    <name type="ordered locus">PputW619_1842</name>
</gene>
<reference key="1">
    <citation type="submission" date="2008-02" db="EMBL/GenBank/DDBJ databases">
        <title>Complete sequence of Pseudomonas putida W619.</title>
        <authorList>
            <person name="Copeland A."/>
            <person name="Lucas S."/>
            <person name="Lapidus A."/>
            <person name="Barry K."/>
            <person name="Detter J.C."/>
            <person name="Glavina del Rio T."/>
            <person name="Dalin E."/>
            <person name="Tice H."/>
            <person name="Pitluck S."/>
            <person name="Chain P."/>
            <person name="Malfatti S."/>
            <person name="Shin M."/>
            <person name="Vergez L."/>
            <person name="Schmutz J."/>
            <person name="Larimer F."/>
            <person name="Land M."/>
            <person name="Hauser L."/>
            <person name="Kyrpides N."/>
            <person name="Kim E."/>
            <person name="Taghavi S."/>
            <person name="Vangronsveld D."/>
            <person name="van der Lelie D."/>
            <person name="Richardson P."/>
        </authorList>
    </citation>
    <scope>NUCLEOTIDE SEQUENCE [LARGE SCALE GENOMIC DNA]</scope>
    <source>
        <strain>W619</strain>
    </source>
</reference>
<accession>B1J6H6</accession>
<organism>
    <name type="scientific">Pseudomonas putida (strain W619)</name>
    <dbReference type="NCBI Taxonomy" id="390235"/>
    <lineage>
        <taxon>Bacteria</taxon>
        <taxon>Pseudomonadati</taxon>
        <taxon>Pseudomonadota</taxon>
        <taxon>Gammaproteobacteria</taxon>
        <taxon>Pseudomonadales</taxon>
        <taxon>Pseudomonadaceae</taxon>
        <taxon>Pseudomonas</taxon>
    </lineage>
</organism>
<sequence>MSARWTSAVLDPQITGGWAVARSPEGFLVDANGALFPRDWLKRQDLDVLAEHGIGHFDGEPVFLLELRSTAEVPGCGWRGLRSFMLEGDFDLYKVLGYAAQIGTWAREHRFCGSCGQPMTQIRWERAMYCQPCDLRSYPRISPSMIVLVTRGDEILLARSPRFVTGVYSTLAGFAEPGESAEDCLVREVREEVAVEVTNIQYVGSQCWPFPHSMMLGFHAEYAGGEIVMQPDEIEDARWFNVHDLPPLPAGRSIARYLIDLYVARRSGLPEPVLPR</sequence>